<evidence type="ECO:0000250" key="1"/>
<evidence type="ECO:0000250" key="2">
    <source>
        <dbReference type="UniProtKB" id="Q8NEU8"/>
    </source>
</evidence>
<evidence type="ECO:0000255" key="3">
    <source>
        <dbReference type="PROSITE-ProRule" id="PRU00145"/>
    </source>
</evidence>
<evidence type="ECO:0000255" key="4">
    <source>
        <dbReference type="PROSITE-ProRule" id="PRU00148"/>
    </source>
</evidence>
<evidence type="ECO:0000255" key="5">
    <source>
        <dbReference type="PROSITE-ProRule" id="PRU00361"/>
    </source>
</evidence>
<evidence type="ECO:0000256" key="6">
    <source>
        <dbReference type="SAM" id="MobiDB-lite"/>
    </source>
</evidence>
<evidence type="ECO:0000269" key="7">
    <source>
    </source>
</evidence>
<evidence type="ECO:0000269" key="8">
    <source>
    </source>
</evidence>
<evidence type="ECO:0000269" key="9">
    <source>
    </source>
</evidence>
<evidence type="ECO:0000269" key="10">
    <source>
    </source>
</evidence>
<evidence type="ECO:0000269" key="11">
    <source>
    </source>
</evidence>
<evidence type="ECO:0000269" key="12">
    <source>
    </source>
</evidence>
<evidence type="ECO:0000269" key="13">
    <source>
    </source>
</evidence>
<evidence type="ECO:0000269" key="14">
    <source>
    </source>
</evidence>
<evidence type="ECO:0000269" key="15">
    <source>
    </source>
</evidence>
<evidence type="ECO:0000303" key="16">
    <source ref="1"/>
</evidence>
<evidence type="ECO:0000305" key="17"/>
<evidence type="ECO:0000312" key="18">
    <source>
        <dbReference type="EMBL" id="AAH02232.1"/>
    </source>
</evidence>
<evidence type="ECO:0000312" key="19">
    <source>
        <dbReference type="EMBL" id="AAH48906.1"/>
    </source>
</evidence>
<evidence type="ECO:0000312" key="20">
    <source>
        <dbReference type="EMBL" id="AAM55532.1"/>
    </source>
</evidence>
<evidence type="ECO:0000312" key="21">
    <source>
        <dbReference type="MGI" id="MGI:2384914"/>
    </source>
</evidence>
<gene>
    <name evidence="21" type="primary">Appl2</name>
    <name type="synonym">Dip13b</name>
    <name evidence="18 21" type="synonym">Dip3b</name>
</gene>
<name>DP13B_MOUSE</name>
<proteinExistence type="evidence at protein level"/>
<comment type="function">
    <text evidence="2 7 9 10 11 12 13 14 15">Multifunctional adapter protein that binds to various membrane receptors, nuclear factors and signaling proteins to regulate many processes, such as cell proliferation, immune response, endosomal trafficking and cell metabolism (PubMed:19661063, PubMed:25328665, PubMed:25568335, PubMed:27219021, PubMed:29467283). Regulates signaling pathway leading to cell proliferation through interaction with RAB5A and subunits of the NuRD/MeCP1 complex (By similarity). Plays a role in immune response by modulating phagocytosis, inflammatory and innate immune responses (PubMed:25328665, PubMed:25568335, PubMed:27219021). In macrophages, enhances Fc-gamma receptor-mediated phagocytosis through interaction with RAB31 leading to activation of PI3K/Akt signaling (PubMed:25568335). In response to LPS, modulates inflammatory responses by playing a key role on the regulation of TLR4 signaling and in the nuclear translocation of RELA/NF-kappa-B p65 and the secretion of pro- and anti-inflammatory cytokines (PubMed:27219021). Also functions as a negative regulator of innate immune response via inhibition of AKT1 signaling pathway by forming a complex with APPL1 and PIK3R1 (PubMed:25328665). Plays a role in endosomal trafficking of TGFBR1 from the endosomes to the nucleus (By similarity). Plays a role in cell metabolism by regulating adiponectin and insulin signaling pathways and adaptative thermogenesis (By similarity) (PubMed:19661063, PubMed:29467283). In muscle, negatively regulates adiponectin-simulated glucose uptake and fatty acid oxidation by inhibiting adiponectin signaling pathway through APPL1 sequestration thereby antagonizing APPL1 action (PubMed:19661063). In muscles, negatively regulates insulin-induced plasma membrane recruitment of GLUT4 and glucose uptake through interaction with TBC1D1 (By similarity). Plays a role in cold and diet-induced adaptive thermogenesis by activating ventromedial hypothalamus (VMH) neurons throught AMPK inhibition which enhances sympathetic outflow to subcutaneous white adipose tissue (sWAT), sWAT beiging and cold tolerance (PubMed:29467283). Also plays a role in other signaling pathways namely Wnt/beta-catenin, HGF and glucocorticoid receptor signaling (PubMed:26445298, PubMed:28965332, PubMed:29675572). Positive regulator of beta-catenin/TCF-dependent transcription through direct interaction with RUVBL2/reptin resulting in the relief of RUVBL2-mediated repression of beta-catenin/TCF target genes by modulating the interactions within the beta-catenin-reptin-HDAC complex (By similarity). May affect adult neurogenesis in hippocampus and olfactory system via regulating the sensitivity of glucocorticoid receptor (PubMed:28965332, PubMed:29675572). Required for fibroblast migration through HGF cell signaling (PubMed:26445298).</text>
</comment>
<comment type="subunit">
    <text evidence="2 7 8 9 10">Homodimer. Homotetramer (By similarity). Binds RAB5A/Rab5 through an N-terminal domain (PubMed:25568335). This interaction is essential for its recruitment to endosomal membranes as well as its role in cell proliferation. Binds subunits of the NuRD/MeCP1 complex (By similarity). Interacts with FSHR; interaction is independent of follicle stimulating hormone stimulation (By similarity). Interacts with APPL1; the interaction is decreased by adiponectin in a time-dependent manner (PubMed:19661063, PubMed:25328665). Forms a complex comprising APPL1, RUVBL2, CTNNB1, HDAC1 and HDAC2; interaction reduces interaction between CTNNB1, HDAC1, HDAC2 and RUVBL2 leading to the decrease of deacetylase activity of this complex; affects the recruitment of repressive complexes to the Wnt target genes (By similarity). Interacts (via BAR domain) with TBC1D1; interaction is dependent of TBC1D1 phosphorylation at 'Ser-235'; interaction diminishes the phosphorylation of TBC1D1 at 'Thr-596', resulting in inhibition of SLC2A4 translocation and glucose uptake (PubMed:24879834). Interacts with ANXA2; targets APPL2 to endosomes and acting in parallel to RAB5A (By similarity). Interacts with RAB31 (in GTP-bound form); interaction contributes to or enhances recruitment of APPL2 to the phagosomes; interaction enhances Fc-gamma receptor-mediated phagocytosis through PI3K/Akt signaling in macrophages (PubMed:25568335). Interacts with PIK3R1; forms a complex with PIK3R1 and APPL1 (PubMed:25328665). Interacts (via BAR domain) with ADIPOR1; hinders the accessibility of APPL1 to ADIPOR1; negatively regulates adiponectin signaling; ADIPOQ dissociates this interaction and facilitates the recruitment of APPL1 to ADIPOR1 (PubMed:19661063). Interacts (via BAR domain) with ADIPOR2; ADIPOQ dissociates this interaction (PubMed:19661063).</text>
</comment>
<comment type="interaction">
    <interactant intactId="EBI-647007">
        <id>Q8K3G9</id>
    </interactant>
    <interactant intactId="EBI-21012140">
        <id>Q60949</id>
        <label>Tbc1d1</label>
    </interactant>
    <organismsDiffer>false</organismsDiffer>
    <experiments>2</experiments>
</comment>
<comment type="subcellular location">
    <subcellularLocation>
        <location evidence="2">Early endosome membrane</location>
        <topology evidence="2">Peripheral membrane protein</topology>
    </subcellularLocation>
    <subcellularLocation>
        <location evidence="2">Nucleus</location>
    </subcellularLocation>
    <subcellularLocation>
        <location evidence="2">Cell membrane</location>
    </subcellularLocation>
    <subcellularLocation>
        <location evidence="2">Endosome membrane</location>
    </subcellularLocation>
    <subcellularLocation>
        <location evidence="7 10">Cytoplasm</location>
    </subcellularLocation>
    <subcellularLocation>
        <location evidence="10">Cytoplasmic vesicle</location>
        <location evidence="10">Phagosome</location>
    </subcellularLocation>
    <subcellularLocation>
        <location evidence="10">Cell projection</location>
        <location evidence="10">Ruffle</location>
    </subcellularLocation>
    <subcellularLocation>
        <location evidence="12">Cell projection</location>
        <location evidence="12">Ruffle membrane</location>
    </subcellularLocation>
    <subcellularLocation>
        <location evidence="12">Cell membrane</location>
    </subcellularLocation>
    <subcellularLocation>
        <location evidence="12">Cytoplasmic vesicle</location>
        <location evidence="12">Phagosome membrane</location>
    </subcellularLocation>
    <text evidence="2 10 12">Early endosomal membrane-bound and nuclear. Translocated into the nucleus upon release from endosomal membranes following internalization of EGF (By similarity). Associates dynamically with cytoplasmic membrane structures that undergo changes in shape, movement, fusion and fission events. PI(4,5)P2 levels are important for membrane association of APPL2 (By similarity). Absent of endosome in macrophage. Colocalized with RAB31 at early-stage phagosome (PubMed:25568335). Localized on macropinosomes in LPS-activated macrophages. Associated with membrane domains in contact with pathogens and pathogen-derived ligands like LPS. First recruited to the ruffles, and accumulates on macropinosomes (PubMed:27219021).</text>
</comment>
<comment type="tissue specificity">
    <text evidence="7 14">Expressed in insulin-target tissues including skeletal muscle, liver, fat, and brain. Highly expressed in kidney and pancreas (PubMed:19661063). Abundantly expressed in the ventromedial hypothalamus (VMH), barely detectable in the arcuate nucleus (ARC) and paraventricular nucleus (PVN) of the hypothalamus. Also expressed in pancreatic beta-cells (PubMed:29467283).</text>
</comment>
<comment type="induction">
    <text evidence="9">Decreases steadily in response to lipopolysaccharide (LPS).</text>
</comment>
<comment type="domain">
    <text evidence="2 7 8">The BAR domain is necessary and sufficient for mediating homotypic and heterotypic interactions; associates with cytoplasmic membrane structures; mediates interaction with TBC1D1 and ADIPOR1 (PubMed:19661063, PubMed:24879834). The PH and PID domains mediate phosphoinositide binding. The PID domain mediates phosphatidylserine binding and allows localization to cytosolic membrane structures and nucleus. The PH domain allows localization to the plasma membrane, cytosolic vesicles and distinct nuclear and perinuclear structures and is sufficient for RUVBL2 interaction (By similarity).</text>
</comment>
<comment type="disruption phenotype">
    <text evidence="8 9 11 14">Mice have normal food intake, body weight, and fasting glucose and insulin levels (PubMed:24879834). Mice are viable and grow normally to adulthood (PubMed:26445298). Appl1 and Appl2 double knockout mice are viable and grossly normal with regard to reproductive potential and postnatal growth (PubMed:26445298). Reduced survival rate after injection of LPS (PubMed:25328665). Conditional knockout mice Appl2 in pancreatic beta-cells and/or ventromedial hypothalamus (VMH) have no obvious effect on circulating level of insulin, body weight, food intake, respiratory exchange ratio (RER), and locomotor activity, but gradually increased adiposity and diminished energy expenditure. Mice exhibit cold intolerance and impairment of cold-induced thermogenesis, beiging program, and SNS outflow in subcutaneous white adipose tissue (sWAT). Conditional knockout mice Appl2 in ventromedial hypothalamus (VMH) have the same phenotype as above (PubMed:29467283).</text>
</comment>
<sequence>MPAVDKLLLEEALQDSPQARSLLSVFEEDAGTLTDYTNQLLQAMQRVYGAQNEMCLATQQLSRQLLAYEKQNFALGKGDEEVISTLHYFSKVMDELNGLHTELAKQLADTMVLPVIQFREKDLTEVSTLKDLFGLASSEHDLSMAKYSRLPKKKENEKAKTEIVKEVAAARRKQHLSSLQYYCALNALQYRKRAAMMEPLIGFAHGQINFFKRGAEMFSKSMDGFLSSVKDMVQSIQVELEAEADKMRVSQQELLSVSESVYTPDIDVATAQINRNLIQKTGYLNLRNKTGLVTTTWERLYFFTQGGNLMCQPRGAVAGGLIQDLDNCSVMAVDCEDRRYCFQISTPSGKPGIILQAESRKEYEEWICAVNNISRQIYLTDNPEAVAIKLNQTALQAVTPITSFGKKQESSCSSQNIKNSDIEDDNIVPKATASIPETEELIAPGTPIQFDIVLPATEFLDQNRGGRRTNPFGETEDGSFPEAEDSLLQQMFIVRFLGSMAVKTDSTAEVIYEAMRQVLAARAIHNIFRMTESHLMVTSQTLRLIDPQTQVSRACFELTSVTQFAAHQENKRLVGFVIRVPESTGEESLSTYIFESNSEGEKICYAINLGKEIIEVQKDPEALARLMLSVPLTNDGKYVLLNDQADDTGGSPSENRGAESEA</sequence>
<feature type="chain" id="PRO_0000079988" description="DCC-interacting protein 13-beta">
    <location>
        <begin position="1"/>
        <end position="662"/>
    </location>
</feature>
<feature type="domain" description="BAR" evidence="5">
    <location>
        <begin position="3"/>
        <end position="268"/>
    </location>
</feature>
<feature type="domain" description="PH" evidence="3">
    <location>
        <begin position="277"/>
        <end position="375"/>
    </location>
</feature>
<feature type="domain" description="PID" evidence="4">
    <location>
        <begin position="486"/>
        <end position="635"/>
    </location>
</feature>
<feature type="region of interest" description="Required for RAB5A binding" evidence="1">
    <location>
        <begin position="1"/>
        <end position="428"/>
    </location>
</feature>
<feature type="region of interest" description="Disordered" evidence="6">
    <location>
        <begin position="642"/>
        <end position="662"/>
    </location>
</feature>
<feature type="sequence conflict" description="In Ref. 2; AAH02232." evidence="17" ref="2">
    <original>V</original>
    <variation>D</variation>
    <location>
        <position position="428"/>
    </location>
</feature>
<protein>
    <recommendedName>
        <fullName evidence="2">DCC-interacting protein 13-beta</fullName>
        <shortName evidence="16">Dip13-beta</shortName>
    </recommendedName>
    <alternativeName>
        <fullName evidence="17">Adapter protein containing PH domain, PTB domain and leucine zipper motif 2</fullName>
    </alternativeName>
</protein>
<keyword id="KW-0131">Cell cycle</keyword>
<keyword id="KW-1003">Cell membrane</keyword>
<keyword id="KW-0966">Cell projection</keyword>
<keyword id="KW-0963">Cytoplasm</keyword>
<keyword id="KW-0968">Cytoplasmic vesicle</keyword>
<keyword id="KW-0967">Endosome</keyword>
<keyword id="KW-0472">Membrane</keyword>
<keyword id="KW-0539">Nucleus</keyword>
<keyword id="KW-1185">Reference proteome</keyword>
<reference evidence="20" key="1">
    <citation type="submission" date="2002-05" db="EMBL/GenBank/DDBJ databases">
        <title>Cloning of mouse DIP13 alpha and beta.</title>
        <authorList>
            <person name="Chen Y.Q."/>
        </authorList>
    </citation>
    <scope>NUCLEOTIDE SEQUENCE [MRNA]</scope>
</reference>
<reference evidence="17 19" key="2">
    <citation type="journal article" date="2004" name="Genome Res.">
        <title>The status, quality, and expansion of the NIH full-length cDNA project: the Mammalian Gene Collection (MGC).</title>
        <authorList>
            <consortium name="The MGC Project Team"/>
        </authorList>
    </citation>
    <scope>NUCLEOTIDE SEQUENCE [LARGE SCALE MRNA]</scope>
    <source>
        <strain evidence="19">FVB/N</strain>
        <tissue evidence="19">Colon</tissue>
        <tissue evidence="18">Mammary tumor</tissue>
    </source>
</reference>
<reference key="3">
    <citation type="journal article" date="2009" name="J. Biol. Chem.">
        <title>Yin-Yang regulation of adiponectin signaling by APPL isoforms in muscle cells.</title>
        <authorList>
            <person name="Wang C."/>
            <person name="Xin X."/>
            <person name="Xiang R."/>
            <person name="Ramos F.J."/>
            <person name="Liu M."/>
            <person name="Lee H.J."/>
            <person name="Chen H."/>
            <person name="Mao X."/>
            <person name="Kikani C.K."/>
            <person name="Liu F."/>
            <person name="Dong L.Q."/>
        </authorList>
    </citation>
    <scope>INTERACTION WITH APPL1; ADIPOR1 AND ADIPOR2</scope>
    <scope>DOMAIN</scope>
    <scope>TISSUE SPECIFICITY</scope>
    <scope>FUNCTION</scope>
    <scope>SUBCELLULAR LOCATION</scope>
</reference>
<reference key="4">
    <citation type="journal article" date="2010" name="Cell">
        <title>A tissue-specific atlas of mouse protein phosphorylation and expression.</title>
        <authorList>
            <person name="Huttlin E.L."/>
            <person name="Jedrychowski M.P."/>
            <person name="Elias J.E."/>
            <person name="Goswami T."/>
            <person name="Rad R."/>
            <person name="Beausoleil S.A."/>
            <person name="Villen J."/>
            <person name="Haas W."/>
            <person name="Sowa M.E."/>
            <person name="Gygi S.P."/>
        </authorList>
    </citation>
    <scope>IDENTIFICATION BY MASS SPECTROMETRY [LARGE SCALE ANALYSIS]</scope>
    <source>
        <tissue>Brain</tissue>
        <tissue>Heart</tissue>
        <tissue>Kidney</tissue>
        <tissue>Lung</tissue>
        <tissue>Pancreas</tissue>
        <tissue>Testis</tissue>
    </source>
</reference>
<reference key="5">
    <citation type="journal article" date="2014" name="Cell Biosci.">
        <title>Absence of Appl2 sensitizes endotoxin shock through activation of PI3K/Akt pathway.</title>
        <authorList>
            <person name="Mao L."/>
            <person name="Lin W."/>
            <person name="Nie T."/>
            <person name="Hui X."/>
            <person name="Gao X."/>
            <person name="Li K."/>
            <person name="Ding M."/>
            <person name="Tang X."/>
            <person name="Li P."/>
            <person name="Wang Y."/>
            <person name="Xu A."/>
            <person name="Liu P."/>
            <person name="Wu D."/>
        </authorList>
    </citation>
    <scope>INDUCTION</scope>
    <scope>DISRUPTION PHENOTYPE</scope>
    <scope>INTERACTION WITH PIK3R1 AND APPL1</scope>
    <scope>FUNCTION</scope>
</reference>
<reference key="6">
    <citation type="journal article" date="2014" name="Diabetes">
        <title>The adaptor protein APPL2 inhibits insulin-stimulated glucose uptake by interacting with TBC1D1 in skeletal muscle.</title>
        <authorList>
            <person name="Cheng K.K."/>
            <person name="Zhu W."/>
            <person name="Chen B."/>
            <person name="Wang Y."/>
            <person name="Wu D."/>
            <person name="Sweeney G."/>
            <person name="Wang B."/>
            <person name="Lam K.S."/>
            <person name="Xu A."/>
        </authorList>
    </citation>
    <scope>DISRUPTION PHENOTYPE</scope>
    <scope>INTERACTION WITH TBC1D1</scope>
    <scope>DOMAIN</scope>
</reference>
<reference key="7">
    <citation type="journal article" date="2015" name="Mol. Biol. Cell">
        <title>Rab31 and APPL2 enhance FcgammaR-mediated phagocytosis through PI3K/Akt signaling in macrophages.</title>
        <authorList>
            <person name="Yeo J.C."/>
            <person name="Wall A.A."/>
            <person name="Luo L."/>
            <person name="Stow J.L."/>
        </authorList>
    </citation>
    <scope>INTERACTION WITH RAB31 AND RAB5A</scope>
    <scope>SUBCELLULAR LOCATION</scope>
    <scope>FUNCTION</scope>
</reference>
<reference key="8">
    <citation type="journal article" date="2016" name="J. Cell. Physiol.">
        <title>Appl1 and Appl2 are Expendable for Mouse Development But Are Essential for HGF-Induced Akt Activation and Migration in Mouse Embryonic Fibroblasts.</title>
        <authorList>
            <person name="Tan Y."/>
            <person name="Xin X."/>
            <person name="Coffey F.J."/>
            <person name="Wiest D.L."/>
            <person name="Dong L.Q."/>
            <person name="Testa J.R."/>
        </authorList>
    </citation>
    <scope>DISRUPTION PHENOTYPE</scope>
    <scope>FUNCTION</scope>
</reference>
<reference key="9">
    <citation type="journal article" date="2016" name="Traffic">
        <title>Distinct Roles for APPL1 and APPL2 in Regulating Toll-like Receptor 4 Signaling in Macrophages.</title>
        <authorList>
            <person name="Yeo J.C."/>
            <person name="Wall A.A."/>
            <person name="Luo L."/>
            <person name="Condon N.D."/>
            <person name="Stow J.L."/>
        </authorList>
    </citation>
    <scope>SUBCELLULAR LOCATION</scope>
    <scope>FUNCTION</scope>
</reference>
<reference key="10">
    <citation type="journal article" date="2018" name="Mol. Neurobiol.">
        <title>Adaptor Protein APPL2 Affects Adult Antidepressant Behaviors and Hippocampal Neurogenesis via Regulating the Sensitivity of Glucocorticoid Receptor.</title>
        <authorList>
            <person name="Gao C."/>
            <person name="Chen X."/>
            <person name="Xu A."/>
            <person name="Cheng K."/>
            <person name="Shen J."/>
        </authorList>
    </citation>
    <scope>FUNCTION</scope>
</reference>
<reference key="11">
    <citation type="journal article" date="2018" name="Mol. Neurobiol.">
        <title>Baicalin Modulates APPL2/Glucocorticoid Receptor Signaling Cascade, Promotes Neurogenesis, and Attenuates Emotional and Olfactory Dysfunctions in Chronic Corticosterone-Induced Depression.</title>
        <authorList>
            <person name="Gao C."/>
            <person name="Du Q."/>
            <person name="Li W."/>
            <person name="Deng R."/>
            <person name="Wang Q."/>
            <person name="Xu A."/>
            <person name="Shen J."/>
        </authorList>
    </citation>
    <scope>FUNCTION</scope>
</reference>
<reference key="12">
    <citation type="journal article" date="2018" name="EMBO Rep.">
        <title>Activation of hypothalamic RIP-Cre neurons promotes beiging of WAT via sympathetic nervous system.</title>
        <authorList>
            <person name="Wang B."/>
            <person name="Li A."/>
            <person name="Li X."/>
            <person name="Ho P.W."/>
            <person name="Wu D."/>
            <person name="Wang X."/>
            <person name="Liu Z."/>
            <person name="Wu K.K."/>
            <person name="Yau S.S."/>
            <person name="Xu A."/>
            <person name="Cheng K.K."/>
        </authorList>
    </citation>
    <scope>TISSUE SPECIFICITY</scope>
    <scope>DISRUPTION PHENOTYPE</scope>
    <scope>FUNCTION</scope>
</reference>
<dbReference type="EMBL" id="AY113706">
    <property type="protein sequence ID" value="AAM55532.1"/>
    <property type="molecule type" value="mRNA"/>
</dbReference>
<dbReference type="EMBL" id="BC002232">
    <property type="protein sequence ID" value="AAH02232.1"/>
    <property type="molecule type" value="mRNA"/>
</dbReference>
<dbReference type="EMBL" id="BC048906">
    <property type="protein sequence ID" value="AAH48906.1"/>
    <property type="molecule type" value="mRNA"/>
</dbReference>
<dbReference type="CCDS" id="CCDS24078.1"/>
<dbReference type="RefSeq" id="NP_660255.1">
    <property type="nucleotide sequence ID" value="NM_145220.2"/>
</dbReference>
<dbReference type="SMR" id="Q8K3G9"/>
<dbReference type="BioGRID" id="229720">
    <property type="interactions" value="9"/>
</dbReference>
<dbReference type="FunCoup" id="Q8K3G9">
    <property type="interactions" value="1990"/>
</dbReference>
<dbReference type="IntAct" id="Q8K3G9">
    <property type="interactions" value="3"/>
</dbReference>
<dbReference type="STRING" id="10090.ENSMUSP00000020500"/>
<dbReference type="iPTMnet" id="Q8K3G9"/>
<dbReference type="PhosphoSitePlus" id="Q8K3G9"/>
<dbReference type="SwissPalm" id="Q8K3G9"/>
<dbReference type="PaxDb" id="10090-ENSMUSP00000020500"/>
<dbReference type="ProteomicsDB" id="277376"/>
<dbReference type="Pumba" id="Q8K3G9"/>
<dbReference type="Antibodypedia" id="30637">
    <property type="antibodies" value="160 antibodies from 22 providers"/>
</dbReference>
<dbReference type="DNASU" id="216190"/>
<dbReference type="Ensembl" id="ENSMUST00000020500.14">
    <property type="protein sequence ID" value="ENSMUSP00000020500.8"/>
    <property type="gene ID" value="ENSMUSG00000020263.15"/>
</dbReference>
<dbReference type="GeneID" id="216190"/>
<dbReference type="KEGG" id="mmu:216190"/>
<dbReference type="UCSC" id="uc007gkk.1">
    <property type="organism name" value="mouse"/>
</dbReference>
<dbReference type="AGR" id="MGI:2384914"/>
<dbReference type="CTD" id="55198"/>
<dbReference type="MGI" id="MGI:2384914">
    <property type="gene designation" value="Appl2"/>
</dbReference>
<dbReference type="VEuPathDB" id="HostDB:ENSMUSG00000020263"/>
<dbReference type="eggNOG" id="KOG0521">
    <property type="taxonomic scope" value="Eukaryota"/>
</dbReference>
<dbReference type="eggNOG" id="KOG3536">
    <property type="taxonomic scope" value="Eukaryota"/>
</dbReference>
<dbReference type="GeneTree" id="ENSGT00940000158319"/>
<dbReference type="HOGENOM" id="CLU_025935_0_0_1"/>
<dbReference type="InParanoid" id="Q8K3G9"/>
<dbReference type="OMA" id="ENDEWIC"/>
<dbReference type="OrthoDB" id="10070851at2759"/>
<dbReference type="PhylomeDB" id="Q8K3G9"/>
<dbReference type="TreeFam" id="TF328669"/>
<dbReference type="BioGRID-ORCS" id="216190">
    <property type="hits" value="0 hits in 77 CRISPR screens"/>
</dbReference>
<dbReference type="CD-CODE" id="CE726F99">
    <property type="entry name" value="Postsynaptic density"/>
</dbReference>
<dbReference type="ChiTaRS" id="Appl2">
    <property type="organism name" value="mouse"/>
</dbReference>
<dbReference type="PRO" id="PR:Q8K3G9"/>
<dbReference type="Proteomes" id="UP000000589">
    <property type="component" value="Chromosome 10"/>
</dbReference>
<dbReference type="RNAct" id="Q8K3G9">
    <property type="molecule type" value="protein"/>
</dbReference>
<dbReference type="Bgee" id="ENSMUSG00000020263">
    <property type="expression patterns" value="Expressed in pigmented layer of retina and 273 other cell types or tissues"/>
</dbReference>
<dbReference type="ExpressionAtlas" id="Q8K3G9">
    <property type="expression patterns" value="baseline and differential"/>
</dbReference>
<dbReference type="GO" id="GO:0005737">
    <property type="term" value="C:cytoplasm"/>
    <property type="evidence" value="ECO:0000314"/>
    <property type="project" value="UniProtKB"/>
</dbReference>
<dbReference type="GO" id="GO:0031410">
    <property type="term" value="C:cytoplasmic vesicle"/>
    <property type="evidence" value="ECO:0000250"/>
    <property type="project" value="UniProtKB"/>
</dbReference>
<dbReference type="GO" id="GO:0031901">
    <property type="term" value="C:early endosome membrane"/>
    <property type="evidence" value="ECO:0007669"/>
    <property type="project" value="UniProtKB-SubCell"/>
</dbReference>
<dbReference type="GO" id="GO:0032009">
    <property type="term" value="C:early phagosome"/>
    <property type="evidence" value="ECO:0000314"/>
    <property type="project" value="UniProtKB"/>
</dbReference>
<dbReference type="GO" id="GO:0036186">
    <property type="term" value="C:early phagosome membrane"/>
    <property type="evidence" value="ECO:0000314"/>
    <property type="project" value="UniProtKB"/>
</dbReference>
<dbReference type="GO" id="GO:0010008">
    <property type="term" value="C:endosome membrane"/>
    <property type="evidence" value="ECO:0000250"/>
    <property type="project" value="UniProtKB"/>
</dbReference>
<dbReference type="GO" id="GO:0044354">
    <property type="term" value="C:macropinosome"/>
    <property type="evidence" value="ECO:0000314"/>
    <property type="project" value="UniProtKB"/>
</dbReference>
<dbReference type="GO" id="GO:0016020">
    <property type="term" value="C:membrane"/>
    <property type="evidence" value="ECO:0000250"/>
    <property type="project" value="UniProtKB"/>
</dbReference>
<dbReference type="GO" id="GO:0005634">
    <property type="term" value="C:nucleus"/>
    <property type="evidence" value="ECO:0000250"/>
    <property type="project" value="UniProtKB"/>
</dbReference>
<dbReference type="GO" id="GO:0005886">
    <property type="term" value="C:plasma membrane"/>
    <property type="evidence" value="ECO:0000314"/>
    <property type="project" value="UniProtKB"/>
</dbReference>
<dbReference type="GO" id="GO:0001726">
    <property type="term" value="C:ruffle"/>
    <property type="evidence" value="ECO:0000314"/>
    <property type="project" value="UniProtKB"/>
</dbReference>
<dbReference type="GO" id="GO:0032587">
    <property type="term" value="C:ruffle membrane"/>
    <property type="evidence" value="ECO:0000314"/>
    <property type="project" value="UniProtKB"/>
</dbReference>
<dbReference type="GO" id="GO:0035091">
    <property type="term" value="F:phosphatidylinositol binding"/>
    <property type="evidence" value="ECO:0000250"/>
    <property type="project" value="UniProtKB"/>
</dbReference>
<dbReference type="GO" id="GO:0001786">
    <property type="term" value="F:phosphatidylserine binding"/>
    <property type="evidence" value="ECO:0000250"/>
    <property type="project" value="UniProtKB"/>
</dbReference>
<dbReference type="GO" id="GO:0042803">
    <property type="term" value="F:protein homodimerization activity"/>
    <property type="evidence" value="ECO:0000250"/>
    <property type="project" value="UniProtKB"/>
</dbReference>
<dbReference type="GO" id="GO:0044877">
    <property type="term" value="F:protein-containing complex binding"/>
    <property type="evidence" value="ECO:0007669"/>
    <property type="project" value="Ensembl"/>
</dbReference>
<dbReference type="GO" id="GO:0031267">
    <property type="term" value="F:small GTPase binding"/>
    <property type="evidence" value="ECO:0000266"/>
    <property type="project" value="MGI"/>
</dbReference>
<dbReference type="GO" id="GO:0033211">
    <property type="term" value="P:adiponectin-activated signaling pathway"/>
    <property type="evidence" value="ECO:0000315"/>
    <property type="project" value="UniProtKB"/>
</dbReference>
<dbReference type="GO" id="GO:0008283">
    <property type="term" value="P:cell population proliferation"/>
    <property type="evidence" value="ECO:0000266"/>
    <property type="project" value="MGI"/>
</dbReference>
<dbReference type="GO" id="GO:0035729">
    <property type="term" value="P:cellular response to hepatocyte growth factor stimulus"/>
    <property type="evidence" value="ECO:0000315"/>
    <property type="project" value="UniProtKB"/>
</dbReference>
<dbReference type="GO" id="GO:0009631">
    <property type="term" value="P:cold acclimation"/>
    <property type="evidence" value="ECO:0000315"/>
    <property type="project" value="UniProtKB"/>
</dbReference>
<dbReference type="GO" id="GO:0002024">
    <property type="term" value="P:diet induced thermogenesis"/>
    <property type="evidence" value="ECO:0000315"/>
    <property type="project" value="UniProtKB"/>
</dbReference>
<dbReference type="GO" id="GO:0042593">
    <property type="term" value="P:glucose homeostasis"/>
    <property type="evidence" value="ECO:0000250"/>
    <property type="project" value="UniProtKB"/>
</dbReference>
<dbReference type="GO" id="GO:1900077">
    <property type="term" value="P:negative regulation of cellular response to insulin stimulus"/>
    <property type="evidence" value="ECO:0000315"/>
    <property type="project" value="UniProtKB"/>
</dbReference>
<dbReference type="GO" id="GO:1900016">
    <property type="term" value="P:negative regulation of cytokine production involved in inflammatory response"/>
    <property type="evidence" value="ECO:0000315"/>
    <property type="project" value="UniProtKB"/>
</dbReference>
<dbReference type="GO" id="GO:0046325">
    <property type="term" value="P:negative regulation of D-glucose import"/>
    <property type="evidence" value="ECO:0000315"/>
    <property type="project" value="UniProtKB"/>
</dbReference>
<dbReference type="GO" id="GO:0046322">
    <property type="term" value="P:negative regulation of fatty acid oxidation"/>
    <property type="evidence" value="ECO:0000315"/>
    <property type="project" value="UniProtKB"/>
</dbReference>
<dbReference type="GO" id="GO:2000178">
    <property type="term" value="P:negative regulation of neural precursor cell proliferation"/>
    <property type="evidence" value="ECO:0000315"/>
    <property type="project" value="UniProtKB"/>
</dbReference>
<dbReference type="GO" id="GO:0050768">
    <property type="term" value="P:negative regulation of neurogenesis"/>
    <property type="evidence" value="ECO:0000315"/>
    <property type="project" value="UniProtKB"/>
</dbReference>
<dbReference type="GO" id="GO:0120162">
    <property type="term" value="P:positive regulation of cold-induced thermogenesis"/>
    <property type="evidence" value="ECO:0000315"/>
    <property type="project" value="UniProtKB"/>
</dbReference>
<dbReference type="GO" id="GO:1905451">
    <property type="term" value="P:positive regulation of Fc-gamma receptor signaling pathway involved in phagocytosis"/>
    <property type="evidence" value="ECO:0000315"/>
    <property type="project" value="UniProtKB"/>
</dbReference>
<dbReference type="GO" id="GO:1905303">
    <property type="term" value="P:positive regulation of macropinocytosis"/>
    <property type="evidence" value="ECO:0000315"/>
    <property type="project" value="UniProtKB"/>
</dbReference>
<dbReference type="GO" id="GO:0060100">
    <property type="term" value="P:positive regulation of phagocytosis, engulfment"/>
    <property type="evidence" value="ECO:0000315"/>
    <property type="project" value="UniProtKB"/>
</dbReference>
<dbReference type="GO" id="GO:0051289">
    <property type="term" value="P:protein homotetramerization"/>
    <property type="evidence" value="ECO:0000250"/>
    <property type="project" value="UniProtKB"/>
</dbReference>
<dbReference type="GO" id="GO:0006606">
    <property type="term" value="P:protein import into nucleus"/>
    <property type="evidence" value="ECO:0000250"/>
    <property type="project" value="UniProtKB"/>
</dbReference>
<dbReference type="GO" id="GO:0010762">
    <property type="term" value="P:regulation of fibroblast migration"/>
    <property type="evidence" value="ECO:0000315"/>
    <property type="project" value="UniProtKB"/>
</dbReference>
<dbReference type="GO" id="GO:2000045">
    <property type="term" value="P:regulation of G1/S transition of mitotic cell cycle"/>
    <property type="evidence" value="ECO:0000250"/>
    <property type="project" value="UniProtKB"/>
</dbReference>
<dbReference type="GO" id="GO:0045088">
    <property type="term" value="P:regulation of innate immune response"/>
    <property type="evidence" value="ECO:0000315"/>
    <property type="project" value="UniProtKB"/>
</dbReference>
<dbReference type="GO" id="GO:0034143">
    <property type="term" value="P:regulation of toll-like receptor 4 signaling pathway"/>
    <property type="evidence" value="ECO:0000315"/>
    <property type="project" value="UniProtKB"/>
</dbReference>
<dbReference type="GO" id="GO:0007179">
    <property type="term" value="P:transforming growth factor beta receptor signaling pathway"/>
    <property type="evidence" value="ECO:0000250"/>
    <property type="project" value="UniProtKB"/>
</dbReference>
<dbReference type="CDD" id="cd13247">
    <property type="entry name" value="BAR-PH_APPL"/>
    <property type="match status" value="1"/>
</dbReference>
<dbReference type="CDD" id="cd07632">
    <property type="entry name" value="BAR_APPL2"/>
    <property type="match status" value="1"/>
</dbReference>
<dbReference type="CDD" id="cd13158">
    <property type="entry name" value="PTB_APPL"/>
    <property type="match status" value="1"/>
</dbReference>
<dbReference type="FunFam" id="2.30.29.30:FF:000160">
    <property type="entry name" value="DCC-interacting protein 13-beta isoform X2"/>
    <property type="match status" value="1"/>
</dbReference>
<dbReference type="FunFam" id="1.20.1270.60:FF:000031">
    <property type="entry name" value="Putative DCC-interacting protein 13-beta isoform 2"/>
    <property type="match status" value="1"/>
</dbReference>
<dbReference type="FunFam" id="2.30.29.30:FF:000067">
    <property type="entry name" value="Putative DCC-interacting protein 13-beta isoform 2"/>
    <property type="match status" value="1"/>
</dbReference>
<dbReference type="Gene3D" id="1.20.1270.60">
    <property type="entry name" value="Arfaptin homology (AH) domain/BAR domain"/>
    <property type="match status" value="1"/>
</dbReference>
<dbReference type="Gene3D" id="2.30.29.30">
    <property type="entry name" value="Pleckstrin-homology domain (PH domain)/Phosphotyrosine-binding domain (PTB)"/>
    <property type="match status" value="2"/>
</dbReference>
<dbReference type="InterPro" id="IPR027267">
    <property type="entry name" value="AH/BAR_dom_sf"/>
</dbReference>
<dbReference type="InterPro" id="IPR047239">
    <property type="entry name" value="BAR_APPL2"/>
</dbReference>
<dbReference type="InterPro" id="IPR004148">
    <property type="entry name" value="BAR_dom"/>
</dbReference>
<dbReference type="InterPro" id="IPR047181">
    <property type="entry name" value="DP13A/B"/>
</dbReference>
<dbReference type="InterPro" id="IPR011993">
    <property type="entry name" value="PH-like_dom_sf"/>
</dbReference>
<dbReference type="InterPro" id="IPR001849">
    <property type="entry name" value="PH_domain"/>
</dbReference>
<dbReference type="InterPro" id="IPR047236">
    <property type="entry name" value="PH_DP13A/B"/>
</dbReference>
<dbReference type="InterPro" id="IPR006020">
    <property type="entry name" value="PTB/PI_dom"/>
</dbReference>
<dbReference type="InterPro" id="IPR047237">
    <property type="entry name" value="PTB_APPL"/>
</dbReference>
<dbReference type="PANTHER" id="PTHR46415">
    <property type="entry name" value="ADAPTOR PROTEIN, PHOSPHOTYROSINE INTERACTION, PH DOMAIN AND LEUCINE ZIPPER-CONTAINING 2"/>
    <property type="match status" value="1"/>
</dbReference>
<dbReference type="PANTHER" id="PTHR46415:SF1">
    <property type="entry name" value="DCC-INTERACTING PROTEIN 13-BETA"/>
    <property type="match status" value="1"/>
</dbReference>
<dbReference type="Pfam" id="PF16746">
    <property type="entry name" value="BAR_3"/>
    <property type="match status" value="1"/>
</dbReference>
<dbReference type="Pfam" id="PF00169">
    <property type="entry name" value="PH"/>
    <property type="match status" value="1"/>
</dbReference>
<dbReference type="Pfam" id="PF00640">
    <property type="entry name" value="PID"/>
    <property type="match status" value="1"/>
</dbReference>
<dbReference type="SMART" id="SM00233">
    <property type="entry name" value="PH"/>
    <property type="match status" value="1"/>
</dbReference>
<dbReference type="SMART" id="SM00462">
    <property type="entry name" value="PTB"/>
    <property type="match status" value="1"/>
</dbReference>
<dbReference type="SUPFAM" id="SSF103657">
    <property type="entry name" value="BAR/IMD domain-like"/>
    <property type="match status" value="1"/>
</dbReference>
<dbReference type="SUPFAM" id="SSF50729">
    <property type="entry name" value="PH domain-like"/>
    <property type="match status" value="2"/>
</dbReference>
<dbReference type="PROSITE" id="PS50003">
    <property type="entry name" value="PH_DOMAIN"/>
    <property type="match status" value="1"/>
</dbReference>
<dbReference type="PROSITE" id="PS01179">
    <property type="entry name" value="PID"/>
    <property type="match status" value="1"/>
</dbReference>
<accession>Q8K3G9</accession>
<accession>Q99LT7</accession>
<organism>
    <name type="scientific">Mus musculus</name>
    <name type="common">Mouse</name>
    <dbReference type="NCBI Taxonomy" id="10090"/>
    <lineage>
        <taxon>Eukaryota</taxon>
        <taxon>Metazoa</taxon>
        <taxon>Chordata</taxon>
        <taxon>Craniata</taxon>
        <taxon>Vertebrata</taxon>
        <taxon>Euteleostomi</taxon>
        <taxon>Mammalia</taxon>
        <taxon>Eutheria</taxon>
        <taxon>Euarchontoglires</taxon>
        <taxon>Glires</taxon>
        <taxon>Rodentia</taxon>
        <taxon>Myomorpha</taxon>
        <taxon>Muroidea</taxon>
        <taxon>Muridae</taxon>
        <taxon>Murinae</taxon>
        <taxon>Mus</taxon>
        <taxon>Mus</taxon>
    </lineage>
</organism>